<accession>B0TL84</accession>
<protein>
    <recommendedName>
        <fullName evidence="1">Argininosuccinate lyase</fullName>
        <shortName evidence="1">ASAL</shortName>
        <ecNumber evidence="1">4.3.2.1</ecNumber>
    </recommendedName>
    <alternativeName>
        <fullName evidence="1">Arginosuccinase</fullName>
    </alternativeName>
</protein>
<gene>
    <name evidence="1" type="primary">argH</name>
    <name type="ordered locus">Shal_4089</name>
</gene>
<comment type="catalytic activity">
    <reaction evidence="1">
        <text>2-(N(omega)-L-arginino)succinate = fumarate + L-arginine</text>
        <dbReference type="Rhea" id="RHEA:24020"/>
        <dbReference type="ChEBI" id="CHEBI:29806"/>
        <dbReference type="ChEBI" id="CHEBI:32682"/>
        <dbReference type="ChEBI" id="CHEBI:57472"/>
        <dbReference type="EC" id="4.3.2.1"/>
    </reaction>
</comment>
<comment type="pathway">
    <text evidence="1">Amino-acid biosynthesis; L-arginine biosynthesis; L-arginine from L-ornithine and carbamoyl phosphate: step 3/3.</text>
</comment>
<comment type="subcellular location">
    <subcellularLocation>
        <location evidence="1">Cytoplasm</location>
    </subcellularLocation>
</comment>
<comment type="similarity">
    <text evidence="1">Belongs to the lyase 1 family. Argininosuccinate lyase subfamily.</text>
</comment>
<evidence type="ECO:0000255" key="1">
    <source>
        <dbReference type="HAMAP-Rule" id="MF_00006"/>
    </source>
</evidence>
<reference key="1">
    <citation type="submission" date="2008-01" db="EMBL/GenBank/DDBJ databases">
        <title>Complete sequence of Shewanella halifaxensis HAW-EB4.</title>
        <authorList>
            <consortium name="US DOE Joint Genome Institute"/>
            <person name="Copeland A."/>
            <person name="Lucas S."/>
            <person name="Lapidus A."/>
            <person name="Glavina del Rio T."/>
            <person name="Dalin E."/>
            <person name="Tice H."/>
            <person name="Bruce D."/>
            <person name="Goodwin L."/>
            <person name="Pitluck S."/>
            <person name="Sims D."/>
            <person name="Brettin T."/>
            <person name="Detter J.C."/>
            <person name="Han C."/>
            <person name="Kuske C.R."/>
            <person name="Schmutz J."/>
            <person name="Larimer F."/>
            <person name="Land M."/>
            <person name="Hauser L."/>
            <person name="Kyrpides N."/>
            <person name="Kim E."/>
            <person name="Zhao J.-S."/>
            <person name="Richardson P."/>
        </authorList>
    </citation>
    <scope>NUCLEOTIDE SEQUENCE [LARGE SCALE GENOMIC DNA]</scope>
    <source>
        <strain>HAW-EB4</strain>
    </source>
</reference>
<sequence length="455" mass="49621">MALWGGRFSQESSALFKLFNDSLPVDFRLIEQDIVGSIAWASAITQVGILTEQECKDLHHALNELLAETIDNPQLIIASGAEDIHSFVEQSLIAKVGDLGKKLHTGRSRNDQVATDLKLWCKKEGEQLLGLLANLRAALIELAERELDAVMPGYTHLQRAQPVVFGHWCLAYVEMFERDISRLQDALKRADTCPLGTGALAGTAYPMDRVKLAKSLGFASPTLNSLDTVSDRDHVIEICSDASISMMHLSRMAEDLIFFNSGEAGFIDLDDEVTSGSSLMPQKKNPDALELIRGKTGRVYGSLMGILTTMKALPLAYNKDMQEDKEGLFDVMDSWSICLEMAALVLSGLKVNREKTLSAAKQGYANSTELADYLVAKGMPFREAHHVVGEAVVSAIAKQTPLEDLTLEELQAFSAVIDADVYDCLTIESCLAKREALGGTSLPQVKSALAVKQAS</sequence>
<dbReference type="EC" id="4.3.2.1" evidence="1"/>
<dbReference type="EMBL" id="CP000931">
    <property type="protein sequence ID" value="ABZ78629.1"/>
    <property type="molecule type" value="Genomic_DNA"/>
</dbReference>
<dbReference type="RefSeq" id="WP_012279146.1">
    <property type="nucleotide sequence ID" value="NC_010334.1"/>
</dbReference>
<dbReference type="SMR" id="B0TL84"/>
<dbReference type="STRING" id="458817.Shal_4089"/>
<dbReference type="KEGG" id="shl:Shal_4089"/>
<dbReference type="eggNOG" id="COG0165">
    <property type="taxonomic scope" value="Bacteria"/>
</dbReference>
<dbReference type="HOGENOM" id="CLU_027272_2_3_6"/>
<dbReference type="OrthoDB" id="9769623at2"/>
<dbReference type="UniPathway" id="UPA00068">
    <property type="reaction ID" value="UER00114"/>
</dbReference>
<dbReference type="Proteomes" id="UP000001317">
    <property type="component" value="Chromosome"/>
</dbReference>
<dbReference type="GO" id="GO:0005829">
    <property type="term" value="C:cytosol"/>
    <property type="evidence" value="ECO:0007669"/>
    <property type="project" value="TreeGrafter"/>
</dbReference>
<dbReference type="GO" id="GO:0004056">
    <property type="term" value="F:argininosuccinate lyase activity"/>
    <property type="evidence" value="ECO:0007669"/>
    <property type="project" value="UniProtKB-UniRule"/>
</dbReference>
<dbReference type="GO" id="GO:0042450">
    <property type="term" value="P:arginine biosynthetic process via ornithine"/>
    <property type="evidence" value="ECO:0007669"/>
    <property type="project" value="InterPro"/>
</dbReference>
<dbReference type="GO" id="GO:0006526">
    <property type="term" value="P:L-arginine biosynthetic process"/>
    <property type="evidence" value="ECO:0007669"/>
    <property type="project" value="UniProtKB-UniRule"/>
</dbReference>
<dbReference type="CDD" id="cd01359">
    <property type="entry name" value="Argininosuccinate_lyase"/>
    <property type="match status" value="1"/>
</dbReference>
<dbReference type="FunFam" id="1.10.40.30:FF:000001">
    <property type="entry name" value="Argininosuccinate lyase"/>
    <property type="match status" value="1"/>
</dbReference>
<dbReference type="FunFam" id="1.20.200.10:FF:000006">
    <property type="entry name" value="Argininosuccinate lyase"/>
    <property type="match status" value="1"/>
</dbReference>
<dbReference type="Gene3D" id="1.10.40.30">
    <property type="entry name" value="Fumarase/aspartase (C-terminal domain)"/>
    <property type="match status" value="1"/>
</dbReference>
<dbReference type="Gene3D" id="1.20.200.10">
    <property type="entry name" value="Fumarase/aspartase (Central domain)"/>
    <property type="match status" value="1"/>
</dbReference>
<dbReference type="Gene3D" id="1.10.275.10">
    <property type="entry name" value="Fumarase/aspartase (N-terminal domain)"/>
    <property type="match status" value="1"/>
</dbReference>
<dbReference type="HAMAP" id="MF_00006">
    <property type="entry name" value="Arg_succ_lyase"/>
    <property type="match status" value="1"/>
</dbReference>
<dbReference type="InterPro" id="IPR029419">
    <property type="entry name" value="Arg_succ_lyase_C"/>
</dbReference>
<dbReference type="InterPro" id="IPR009049">
    <property type="entry name" value="Argininosuccinate_lyase"/>
</dbReference>
<dbReference type="InterPro" id="IPR024083">
    <property type="entry name" value="Fumarase/histidase_N"/>
</dbReference>
<dbReference type="InterPro" id="IPR020557">
    <property type="entry name" value="Fumarate_lyase_CS"/>
</dbReference>
<dbReference type="InterPro" id="IPR000362">
    <property type="entry name" value="Fumarate_lyase_fam"/>
</dbReference>
<dbReference type="InterPro" id="IPR022761">
    <property type="entry name" value="Fumarate_lyase_N"/>
</dbReference>
<dbReference type="InterPro" id="IPR008948">
    <property type="entry name" value="L-Aspartase-like"/>
</dbReference>
<dbReference type="NCBIfam" id="TIGR00838">
    <property type="entry name" value="argH"/>
    <property type="match status" value="1"/>
</dbReference>
<dbReference type="NCBIfam" id="NF008964">
    <property type="entry name" value="PRK12308.1"/>
    <property type="match status" value="1"/>
</dbReference>
<dbReference type="PANTHER" id="PTHR43814">
    <property type="entry name" value="ARGININOSUCCINATE LYASE"/>
    <property type="match status" value="1"/>
</dbReference>
<dbReference type="PANTHER" id="PTHR43814:SF1">
    <property type="entry name" value="ARGININOSUCCINATE LYASE"/>
    <property type="match status" value="1"/>
</dbReference>
<dbReference type="Pfam" id="PF14698">
    <property type="entry name" value="ASL_C2"/>
    <property type="match status" value="1"/>
</dbReference>
<dbReference type="Pfam" id="PF00206">
    <property type="entry name" value="Lyase_1"/>
    <property type="match status" value="1"/>
</dbReference>
<dbReference type="PRINTS" id="PR00145">
    <property type="entry name" value="ARGSUCLYASE"/>
</dbReference>
<dbReference type="PRINTS" id="PR00149">
    <property type="entry name" value="FUMRATELYASE"/>
</dbReference>
<dbReference type="SUPFAM" id="SSF48557">
    <property type="entry name" value="L-aspartase-like"/>
    <property type="match status" value="1"/>
</dbReference>
<dbReference type="PROSITE" id="PS00163">
    <property type="entry name" value="FUMARATE_LYASES"/>
    <property type="match status" value="1"/>
</dbReference>
<proteinExistence type="inferred from homology"/>
<keyword id="KW-0028">Amino-acid biosynthesis</keyword>
<keyword id="KW-0055">Arginine biosynthesis</keyword>
<keyword id="KW-0963">Cytoplasm</keyword>
<keyword id="KW-0456">Lyase</keyword>
<name>ARLY_SHEHH</name>
<organism>
    <name type="scientific">Shewanella halifaxensis (strain HAW-EB4)</name>
    <dbReference type="NCBI Taxonomy" id="458817"/>
    <lineage>
        <taxon>Bacteria</taxon>
        <taxon>Pseudomonadati</taxon>
        <taxon>Pseudomonadota</taxon>
        <taxon>Gammaproteobacteria</taxon>
        <taxon>Alteromonadales</taxon>
        <taxon>Shewanellaceae</taxon>
        <taxon>Shewanella</taxon>
    </lineage>
</organism>
<feature type="chain" id="PRO_1000073858" description="Argininosuccinate lyase">
    <location>
        <begin position="1"/>
        <end position="455"/>
    </location>
</feature>